<feature type="chain" id="PRO_0000358376" description="NADH-quinone oxidoreductase subunit B 2">
    <location>
        <begin position="1"/>
        <end position="167"/>
    </location>
</feature>
<feature type="binding site" evidence="2">
    <location>
        <position position="39"/>
    </location>
    <ligand>
        <name>[4Fe-4S] cluster</name>
        <dbReference type="ChEBI" id="CHEBI:49883"/>
    </ligand>
</feature>
<feature type="binding site" evidence="2">
    <location>
        <position position="40"/>
    </location>
    <ligand>
        <name>[4Fe-4S] cluster</name>
        <dbReference type="ChEBI" id="CHEBI:49883"/>
    </ligand>
</feature>
<feature type="binding site" evidence="2">
    <location>
        <position position="104"/>
    </location>
    <ligand>
        <name>[4Fe-4S] cluster</name>
        <dbReference type="ChEBI" id="CHEBI:49883"/>
    </ligand>
</feature>
<feature type="binding site" evidence="2">
    <location>
        <position position="134"/>
    </location>
    <ligand>
        <name>[4Fe-4S] cluster</name>
        <dbReference type="ChEBI" id="CHEBI:49883"/>
    </ligand>
</feature>
<proteinExistence type="inferred from homology"/>
<reference key="1">
    <citation type="journal article" date="2010" name="Genome Biol. Evol.">
        <title>Continuing evolution of Burkholderia mallei through genome reduction and large-scale rearrangements.</title>
        <authorList>
            <person name="Losada L."/>
            <person name="Ronning C.M."/>
            <person name="DeShazer D."/>
            <person name="Woods D."/>
            <person name="Fedorova N."/>
            <person name="Kim H.S."/>
            <person name="Shabalina S.A."/>
            <person name="Pearson T.R."/>
            <person name="Brinkac L."/>
            <person name="Tan P."/>
            <person name="Nandi T."/>
            <person name="Crabtree J."/>
            <person name="Badger J."/>
            <person name="Beckstrom-Sternberg S."/>
            <person name="Saqib M."/>
            <person name="Schutzer S.E."/>
            <person name="Keim P."/>
            <person name="Nierman W.C."/>
        </authorList>
    </citation>
    <scope>NUCLEOTIDE SEQUENCE [LARGE SCALE GENOMIC DNA]</scope>
    <source>
        <strain>SAVP1</strain>
    </source>
</reference>
<comment type="function">
    <text evidence="1">NDH-1 shuttles electrons from NADH, via FMN and iron-sulfur (Fe-S) centers, to quinones in the respiratory chain. Couples the redox reaction to proton translocation (for every two electrons transferred, four hydrogen ions are translocated across the cytoplasmic membrane), and thus conserves the redox energy in a proton gradient (By similarity).</text>
</comment>
<comment type="catalytic activity">
    <reaction evidence="2">
        <text>a quinone + NADH + 5 H(+)(in) = a quinol + NAD(+) + 4 H(+)(out)</text>
        <dbReference type="Rhea" id="RHEA:57888"/>
        <dbReference type="ChEBI" id="CHEBI:15378"/>
        <dbReference type="ChEBI" id="CHEBI:24646"/>
        <dbReference type="ChEBI" id="CHEBI:57540"/>
        <dbReference type="ChEBI" id="CHEBI:57945"/>
        <dbReference type="ChEBI" id="CHEBI:132124"/>
    </reaction>
</comment>
<comment type="cofactor">
    <cofactor evidence="2">
        <name>[4Fe-4S] cluster</name>
        <dbReference type="ChEBI" id="CHEBI:49883"/>
    </cofactor>
    <text evidence="2">Binds 1 [4Fe-4S] cluster.</text>
</comment>
<comment type="subunit">
    <text evidence="2">NDH-1 is composed of 14 different subunits. Subunits NuoB, C, D, E, F, and G constitute the peripheral sector of the complex.</text>
</comment>
<comment type="subcellular location">
    <subcellularLocation>
        <location evidence="2">Cell inner membrane</location>
        <topology evidence="2">Peripheral membrane protein</topology>
        <orientation evidence="2">Cytoplasmic side</orientation>
    </subcellularLocation>
</comment>
<comment type="similarity">
    <text evidence="2">Belongs to the complex I 20 kDa subunit family.</text>
</comment>
<comment type="sequence caution" evidence="3">
    <conflict type="erroneous initiation">
        <sequence resource="EMBL-CDS" id="ABM48580"/>
    </conflict>
</comment>
<organism>
    <name type="scientific">Burkholderia mallei (strain SAVP1)</name>
    <dbReference type="NCBI Taxonomy" id="320388"/>
    <lineage>
        <taxon>Bacteria</taxon>
        <taxon>Pseudomonadati</taxon>
        <taxon>Pseudomonadota</taxon>
        <taxon>Betaproteobacteria</taxon>
        <taxon>Burkholderiales</taxon>
        <taxon>Burkholderiaceae</taxon>
        <taxon>Burkholderia</taxon>
        <taxon>pseudomallei group</taxon>
    </lineage>
</organism>
<sequence length="167" mass="18469">MANHPLTLEKDGFIVTTLDAAMAAAQKNSLWYMTFGLACCAVEMMHAAGARYDMDRFGMIPRASPRQCDLMIVAGTLTNKMAPAMRRVYDQMAEPRYVVSMGSCANGGGYYHYSYSVVRGCDRIVPVDVYVPGCPPTAEALVYGLMQLQRKVAERSTHSRPKLFARP</sequence>
<evidence type="ECO:0000250" key="1"/>
<evidence type="ECO:0000255" key="2">
    <source>
        <dbReference type="HAMAP-Rule" id="MF_01356"/>
    </source>
</evidence>
<evidence type="ECO:0000305" key="3"/>
<dbReference type="EC" id="7.1.1.-" evidence="2"/>
<dbReference type="EMBL" id="CP000525">
    <property type="protein sequence ID" value="ABM48580.1"/>
    <property type="status" value="ALT_INIT"/>
    <property type="molecule type" value="Genomic_DNA"/>
</dbReference>
<dbReference type="RefSeq" id="WP_004186860.1">
    <property type="nucleotide sequence ID" value="NC_008784.1"/>
</dbReference>
<dbReference type="SMR" id="A1UWB1"/>
<dbReference type="KEGG" id="bmv:BMASAVP1_0658"/>
<dbReference type="HOGENOM" id="CLU_055737_0_0_4"/>
<dbReference type="GO" id="GO:0005886">
    <property type="term" value="C:plasma membrane"/>
    <property type="evidence" value="ECO:0007669"/>
    <property type="project" value="UniProtKB-SubCell"/>
</dbReference>
<dbReference type="GO" id="GO:0045271">
    <property type="term" value="C:respiratory chain complex I"/>
    <property type="evidence" value="ECO:0007669"/>
    <property type="project" value="TreeGrafter"/>
</dbReference>
<dbReference type="GO" id="GO:0051539">
    <property type="term" value="F:4 iron, 4 sulfur cluster binding"/>
    <property type="evidence" value="ECO:0007669"/>
    <property type="project" value="UniProtKB-KW"/>
</dbReference>
<dbReference type="GO" id="GO:0005506">
    <property type="term" value="F:iron ion binding"/>
    <property type="evidence" value="ECO:0007669"/>
    <property type="project" value="UniProtKB-UniRule"/>
</dbReference>
<dbReference type="GO" id="GO:0008137">
    <property type="term" value="F:NADH dehydrogenase (ubiquinone) activity"/>
    <property type="evidence" value="ECO:0007669"/>
    <property type="project" value="InterPro"/>
</dbReference>
<dbReference type="GO" id="GO:0050136">
    <property type="term" value="F:NADH:ubiquinone reductase (non-electrogenic) activity"/>
    <property type="evidence" value="ECO:0007669"/>
    <property type="project" value="UniProtKB-UniRule"/>
</dbReference>
<dbReference type="GO" id="GO:0048038">
    <property type="term" value="F:quinone binding"/>
    <property type="evidence" value="ECO:0007669"/>
    <property type="project" value="UniProtKB-KW"/>
</dbReference>
<dbReference type="GO" id="GO:0009060">
    <property type="term" value="P:aerobic respiration"/>
    <property type="evidence" value="ECO:0007669"/>
    <property type="project" value="TreeGrafter"/>
</dbReference>
<dbReference type="GO" id="GO:0015990">
    <property type="term" value="P:electron transport coupled proton transport"/>
    <property type="evidence" value="ECO:0007669"/>
    <property type="project" value="TreeGrafter"/>
</dbReference>
<dbReference type="FunFam" id="3.40.50.12280:FF:000001">
    <property type="entry name" value="NADH-quinone oxidoreductase subunit B 2"/>
    <property type="match status" value="1"/>
</dbReference>
<dbReference type="Gene3D" id="3.40.50.12280">
    <property type="match status" value="1"/>
</dbReference>
<dbReference type="HAMAP" id="MF_01356">
    <property type="entry name" value="NDH1_NuoB"/>
    <property type="match status" value="1"/>
</dbReference>
<dbReference type="InterPro" id="IPR006137">
    <property type="entry name" value="NADH_UbQ_OxRdtase-like_20kDa"/>
</dbReference>
<dbReference type="InterPro" id="IPR006138">
    <property type="entry name" value="NADH_UQ_OxRdtase_20Kd_su"/>
</dbReference>
<dbReference type="NCBIfam" id="TIGR01957">
    <property type="entry name" value="nuoB_fam"/>
    <property type="match status" value="1"/>
</dbReference>
<dbReference type="NCBIfam" id="NF005012">
    <property type="entry name" value="PRK06411.1"/>
    <property type="match status" value="1"/>
</dbReference>
<dbReference type="PANTHER" id="PTHR11995">
    <property type="entry name" value="NADH DEHYDROGENASE"/>
    <property type="match status" value="1"/>
</dbReference>
<dbReference type="PANTHER" id="PTHR11995:SF14">
    <property type="entry name" value="NADH DEHYDROGENASE [UBIQUINONE] IRON-SULFUR PROTEIN 7, MITOCHONDRIAL"/>
    <property type="match status" value="1"/>
</dbReference>
<dbReference type="Pfam" id="PF01058">
    <property type="entry name" value="Oxidored_q6"/>
    <property type="match status" value="1"/>
</dbReference>
<dbReference type="SUPFAM" id="SSF56770">
    <property type="entry name" value="HydA/Nqo6-like"/>
    <property type="match status" value="1"/>
</dbReference>
<dbReference type="PROSITE" id="PS01150">
    <property type="entry name" value="COMPLEX1_20K"/>
    <property type="match status" value="1"/>
</dbReference>
<gene>
    <name evidence="2" type="primary">nuoB2</name>
    <name type="ordered locus">BMASAVP1_0658</name>
</gene>
<accession>A1UWB1</accession>
<name>NUOB2_BURMS</name>
<keyword id="KW-0004">4Fe-4S</keyword>
<keyword id="KW-0997">Cell inner membrane</keyword>
<keyword id="KW-1003">Cell membrane</keyword>
<keyword id="KW-0408">Iron</keyword>
<keyword id="KW-0411">Iron-sulfur</keyword>
<keyword id="KW-0472">Membrane</keyword>
<keyword id="KW-0479">Metal-binding</keyword>
<keyword id="KW-0520">NAD</keyword>
<keyword id="KW-0874">Quinone</keyword>
<keyword id="KW-1278">Translocase</keyword>
<keyword id="KW-0813">Transport</keyword>
<keyword id="KW-0830">Ubiquinone</keyword>
<protein>
    <recommendedName>
        <fullName evidence="2">NADH-quinone oxidoreductase subunit B 2</fullName>
        <ecNumber evidence="2">7.1.1.-</ecNumber>
    </recommendedName>
    <alternativeName>
        <fullName evidence="2">NADH dehydrogenase I subunit B 2</fullName>
    </alternativeName>
    <alternativeName>
        <fullName evidence="2">NDH-1 subunit B 2</fullName>
    </alternativeName>
</protein>